<feature type="chain" id="PRO_0000029755" description="Phosphatidylserine decarboxylase beta chain" evidence="1">
    <location>
        <begin position="1"/>
        <end position="189"/>
    </location>
</feature>
<feature type="chain" id="PRO_0000029756" description="Phosphatidylserine decarboxylase alpha chain" evidence="1">
    <location>
        <begin position="190"/>
        <end position="233"/>
    </location>
</feature>
<feature type="active site" description="Schiff-base intermediate with substrate; via pyruvic acid" evidence="1">
    <location>
        <position position="190"/>
    </location>
</feature>
<feature type="site" description="Cleavage (non-hydrolytic); by autocatalysis" evidence="1">
    <location>
        <begin position="189"/>
        <end position="190"/>
    </location>
</feature>
<feature type="modified residue" description="Pyruvic acid (Ser); by autocatalysis" evidence="1">
    <location>
        <position position="190"/>
    </location>
</feature>
<accession>Q6G070</accession>
<comment type="function">
    <text evidence="1">Catalyzes the formation of phosphatidylethanolamine (PtdEtn) from phosphatidylserine (PtdSer).</text>
</comment>
<comment type="catalytic activity">
    <reaction evidence="1">
        <text>a 1,2-diacyl-sn-glycero-3-phospho-L-serine + H(+) = a 1,2-diacyl-sn-glycero-3-phosphoethanolamine + CO2</text>
        <dbReference type="Rhea" id="RHEA:20828"/>
        <dbReference type="ChEBI" id="CHEBI:15378"/>
        <dbReference type="ChEBI" id="CHEBI:16526"/>
        <dbReference type="ChEBI" id="CHEBI:57262"/>
        <dbReference type="ChEBI" id="CHEBI:64612"/>
        <dbReference type="EC" id="4.1.1.65"/>
    </reaction>
</comment>
<comment type="cofactor">
    <cofactor evidence="1">
        <name>pyruvate</name>
        <dbReference type="ChEBI" id="CHEBI:15361"/>
    </cofactor>
    <text evidence="1">Binds 1 pyruvoyl group covalently per subunit.</text>
</comment>
<comment type="pathway">
    <text evidence="1">Phospholipid metabolism; phosphatidylethanolamine biosynthesis; phosphatidylethanolamine from CDP-diacylglycerol: step 2/2.</text>
</comment>
<comment type="subunit">
    <text evidence="1">Heterodimer of a large membrane-associated beta subunit and a small pyruvoyl-containing alpha subunit.</text>
</comment>
<comment type="subcellular location">
    <subcellularLocation>
        <location evidence="1">Cell membrane</location>
        <topology evidence="1">Peripheral membrane protein</topology>
    </subcellularLocation>
</comment>
<comment type="PTM">
    <text evidence="1">Is synthesized initially as an inactive proenzyme. Formation of the active enzyme involves a self-maturation process in which the active site pyruvoyl group is generated from an internal serine residue via an autocatalytic post-translational modification. Two non-identical subunits are generated from the proenzyme in this reaction, and the pyruvate is formed at the N-terminus of the alpha chain, which is derived from the carboxyl end of the proenzyme. The post-translation cleavage follows an unusual pathway, termed non-hydrolytic serinolysis, in which the side chain hydroxyl group of the serine supplies its oxygen atom to form the C-terminus of the beta chain, while the remainder of the serine residue undergoes an oxidative deamination to produce ammonia and the pyruvoyl prosthetic group on the alpha chain.</text>
</comment>
<comment type="similarity">
    <text evidence="1">Belongs to the phosphatidylserine decarboxylase family. PSD-A subfamily.</text>
</comment>
<proteinExistence type="inferred from homology"/>
<reference key="1">
    <citation type="journal article" date="2004" name="Proc. Natl. Acad. Sci. U.S.A.">
        <title>The louse-borne human pathogen Bartonella quintana is a genomic derivative of the zoonotic agent Bartonella henselae.</title>
        <authorList>
            <person name="Alsmark U.C.M."/>
            <person name="Frank A.C."/>
            <person name="Karlberg E.O."/>
            <person name="Legault B.-A."/>
            <person name="Ardell D.H."/>
            <person name="Canbaeck B."/>
            <person name="Eriksson A.-S."/>
            <person name="Naeslund A.K."/>
            <person name="Handley S.A."/>
            <person name="Huvet M."/>
            <person name="La Scola B."/>
            <person name="Holmberg M."/>
            <person name="Andersson S.G.E."/>
        </authorList>
    </citation>
    <scope>NUCLEOTIDE SEQUENCE [LARGE SCALE GENOMIC DNA]</scope>
    <source>
        <strain>Toulouse</strain>
    </source>
</reference>
<gene>
    <name evidence="1" type="primary">psd</name>
    <name type="synonym">psdA</name>
    <name type="ordered locus">BQ04400</name>
</gene>
<sequence length="233" mass="26179">MSILQSVHNSFTPVHKEGYPFIIAFFVLSLIFGWVWSPLFWCGLVLTVWCIYFFRDPNRVIPVNSNWIISPADGRISFVEPCIPPEELGLGNEEMIRISVFMDIFSCHINRIPISGKVESIVYRPGQFANAELDKASQFNERNGMVIDSKHGKIGVVQIAGAIARRIVCWSKENDSVITGQRFGLIRFGSRLDIYIPTEVKLRVAVGQTAIAGETVLGSFDDKSSATIDFRFD</sequence>
<keyword id="KW-1003">Cell membrane</keyword>
<keyword id="KW-0210">Decarboxylase</keyword>
<keyword id="KW-0444">Lipid biosynthesis</keyword>
<keyword id="KW-0443">Lipid metabolism</keyword>
<keyword id="KW-0456">Lyase</keyword>
<keyword id="KW-0472">Membrane</keyword>
<keyword id="KW-0594">Phospholipid biosynthesis</keyword>
<keyword id="KW-1208">Phospholipid metabolism</keyword>
<keyword id="KW-0670">Pyruvate</keyword>
<keyword id="KW-0865">Zymogen</keyword>
<organism>
    <name type="scientific">Bartonella quintana (strain Toulouse)</name>
    <name type="common">Rochalimaea quintana</name>
    <dbReference type="NCBI Taxonomy" id="283165"/>
    <lineage>
        <taxon>Bacteria</taxon>
        <taxon>Pseudomonadati</taxon>
        <taxon>Pseudomonadota</taxon>
        <taxon>Alphaproteobacteria</taxon>
        <taxon>Hyphomicrobiales</taxon>
        <taxon>Bartonellaceae</taxon>
        <taxon>Bartonella</taxon>
    </lineage>
</organism>
<evidence type="ECO:0000255" key="1">
    <source>
        <dbReference type="HAMAP-Rule" id="MF_00664"/>
    </source>
</evidence>
<dbReference type="EC" id="4.1.1.65" evidence="1"/>
<dbReference type="EMBL" id="BX897700">
    <property type="protein sequence ID" value="CAF25939.1"/>
    <property type="molecule type" value="Genomic_DNA"/>
</dbReference>
<dbReference type="RefSeq" id="WP_011179228.1">
    <property type="nucleotide sequence ID" value="NC_005955.1"/>
</dbReference>
<dbReference type="SMR" id="Q6G070"/>
<dbReference type="KEGG" id="bqu:BQ04400"/>
<dbReference type="eggNOG" id="COG0688">
    <property type="taxonomic scope" value="Bacteria"/>
</dbReference>
<dbReference type="HOGENOM" id="CLU_072492_0_0_5"/>
<dbReference type="OrthoDB" id="9790893at2"/>
<dbReference type="UniPathway" id="UPA00558">
    <property type="reaction ID" value="UER00616"/>
</dbReference>
<dbReference type="Proteomes" id="UP000000597">
    <property type="component" value="Chromosome"/>
</dbReference>
<dbReference type="GO" id="GO:0005886">
    <property type="term" value="C:plasma membrane"/>
    <property type="evidence" value="ECO:0007669"/>
    <property type="project" value="UniProtKB-SubCell"/>
</dbReference>
<dbReference type="GO" id="GO:0004609">
    <property type="term" value="F:phosphatidylserine decarboxylase activity"/>
    <property type="evidence" value="ECO:0007669"/>
    <property type="project" value="UniProtKB-UniRule"/>
</dbReference>
<dbReference type="GO" id="GO:0006646">
    <property type="term" value="P:phosphatidylethanolamine biosynthetic process"/>
    <property type="evidence" value="ECO:0007669"/>
    <property type="project" value="UniProtKB-UniRule"/>
</dbReference>
<dbReference type="HAMAP" id="MF_00664">
    <property type="entry name" value="PS_decarb_PSD_A"/>
    <property type="match status" value="1"/>
</dbReference>
<dbReference type="InterPro" id="IPR003817">
    <property type="entry name" value="PS_Dcarbxylase"/>
</dbReference>
<dbReference type="InterPro" id="IPR033175">
    <property type="entry name" value="PSD-A"/>
</dbReference>
<dbReference type="NCBIfam" id="NF003677">
    <property type="entry name" value="PRK05305.1-1"/>
    <property type="match status" value="1"/>
</dbReference>
<dbReference type="NCBIfam" id="NF003678">
    <property type="entry name" value="PRK05305.1-2"/>
    <property type="match status" value="1"/>
</dbReference>
<dbReference type="NCBIfam" id="NF003679">
    <property type="entry name" value="PRK05305.1-3"/>
    <property type="match status" value="1"/>
</dbReference>
<dbReference type="NCBIfam" id="NF003685">
    <property type="entry name" value="PRK05305.2-5"/>
    <property type="match status" value="1"/>
</dbReference>
<dbReference type="PANTHER" id="PTHR35809">
    <property type="entry name" value="ARCHAETIDYLSERINE DECARBOXYLASE PROENZYME-RELATED"/>
    <property type="match status" value="1"/>
</dbReference>
<dbReference type="PANTHER" id="PTHR35809:SF1">
    <property type="entry name" value="ARCHAETIDYLSERINE DECARBOXYLASE PROENZYME-RELATED"/>
    <property type="match status" value="1"/>
</dbReference>
<dbReference type="Pfam" id="PF02666">
    <property type="entry name" value="PS_Dcarbxylase"/>
    <property type="match status" value="1"/>
</dbReference>
<protein>
    <recommendedName>
        <fullName evidence="1">Phosphatidylserine decarboxylase proenzyme</fullName>
        <ecNumber evidence="1">4.1.1.65</ecNumber>
    </recommendedName>
    <component>
        <recommendedName>
            <fullName evidence="1">Phosphatidylserine decarboxylase alpha chain</fullName>
        </recommendedName>
    </component>
    <component>
        <recommendedName>
            <fullName evidence="1">Phosphatidylserine decarboxylase beta chain</fullName>
        </recommendedName>
    </component>
</protein>
<name>PSD_BARQU</name>